<dbReference type="EC" id="1.1.1.37" evidence="1"/>
<dbReference type="EMBL" id="CU234118">
    <property type="protein sequence ID" value="CAL74351.1"/>
    <property type="molecule type" value="Genomic_DNA"/>
</dbReference>
<dbReference type="RefSeq" id="WP_011923631.1">
    <property type="nucleotide sequence ID" value="NC_009445.1"/>
</dbReference>
<dbReference type="SMR" id="A4YKC5"/>
<dbReference type="STRING" id="114615.BRADO0403"/>
<dbReference type="KEGG" id="bra:BRADO0403"/>
<dbReference type="eggNOG" id="COG0039">
    <property type="taxonomic scope" value="Bacteria"/>
</dbReference>
<dbReference type="HOGENOM" id="CLU_045401_2_1_5"/>
<dbReference type="OrthoDB" id="9802969at2"/>
<dbReference type="Proteomes" id="UP000001994">
    <property type="component" value="Chromosome"/>
</dbReference>
<dbReference type="GO" id="GO:0004459">
    <property type="term" value="F:L-lactate dehydrogenase activity"/>
    <property type="evidence" value="ECO:0007669"/>
    <property type="project" value="TreeGrafter"/>
</dbReference>
<dbReference type="GO" id="GO:0030060">
    <property type="term" value="F:L-malate dehydrogenase (NAD+) activity"/>
    <property type="evidence" value="ECO:0007669"/>
    <property type="project" value="UniProtKB-UniRule"/>
</dbReference>
<dbReference type="GO" id="GO:0006089">
    <property type="term" value="P:lactate metabolic process"/>
    <property type="evidence" value="ECO:0007669"/>
    <property type="project" value="TreeGrafter"/>
</dbReference>
<dbReference type="GO" id="GO:0006099">
    <property type="term" value="P:tricarboxylic acid cycle"/>
    <property type="evidence" value="ECO:0007669"/>
    <property type="project" value="UniProtKB-UniRule"/>
</dbReference>
<dbReference type="CDD" id="cd01339">
    <property type="entry name" value="LDH-like_MDH"/>
    <property type="match status" value="1"/>
</dbReference>
<dbReference type="FunFam" id="3.40.50.720:FF:000018">
    <property type="entry name" value="Malate dehydrogenase"/>
    <property type="match status" value="1"/>
</dbReference>
<dbReference type="FunFam" id="3.90.110.10:FF:000004">
    <property type="entry name" value="Malate dehydrogenase"/>
    <property type="match status" value="1"/>
</dbReference>
<dbReference type="Gene3D" id="3.90.110.10">
    <property type="entry name" value="Lactate dehydrogenase/glycoside hydrolase, family 4, C-terminal"/>
    <property type="match status" value="1"/>
</dbReference>
<dbReference type="Gene3D" id="3.40.50.720">
    <property type="entry name" value="NAD(P)-binding Rossmann-like Domain"/>
    <property type="match status" value="1"/>
</dbReference>
<dbReference type="HAMAP" id="MF_00487">
    <property type="entry name" value="Malate_dehydrog_3"/>
    <property type="match status" value="1"/>
</dbReference>
<dbReference type="InterPro" id="IPR001557">
    <property type="entry name" value="L-lactate/malate_DH"/>
</dbReference>
<dbReference type="InterPro" id="IPR022383">
    <property type="entry name" value="Lactate/malate_DH_C"/>
</dbReference>
<dbReference type="InterPro" id="IPR001236">
    <property type="entry name" value="Lactate/malate_DH_N"/>
</dbReference>
<dbReference type="InterPro" id="IPR015955">
    <property type="entry name" value="Lactate_DH/Glyco_Ohase_4_C"/>
</dbReference>
<dbReference type="InterPro" id="IPR011275">
    <property type="entry name" value="Malate_DH_type3"/>
</dbReference>
<dbReference type="InterPro" id="IPR036291">
    <property type="entry name" value="NAD(P)-bd_dom_sf"/>
</dbReference>
<dbReference type="NCBIfam" id="TIGR01763">
    <property type="entry name" value="MalateDH_bact"/>
    <property type="match status" value="1"/>
</dbReference>
<dbReference type="NCBIfam" id="NF004863">
    <property type="entry name" value="PRK06223.1"/>
    <property type="match status" value="1"/>
</dbReference>
<dbReference type="PANTHER" id="PTHR43128">
    <property type="entry name" value="L-2-HYDROXYCARBOXYLATE DEHYDROGENASE (NAD(P)(+))"/>
    <property type="match status" value="1"/>
</dbReference>
<dbReference type="PANTHER" id="PTHR43128:SF16">
    <property type="entry name" value="L-LACTATE DEHYDROGENASE"/>
    <property type="match status" value="1"/>
</dbReference>
<dbReference type="Pfam" id="PF02866">
    <property type="entry name" value="Ldh_1_C"/>
    <property type="match status" value="1"/>
</dbReference>
<dbReference type="Pfam" id="PF00056">
    <property type="entry name" value="Ldh_1_N"/>
    <property type="match status" value="1"/>
</dbReference>
<dbReference type="PIRSF" id="PIRSF000102">
    <property type="entry name" value="Lac_mal_DH"/>
    <property type="match status" value="1"/>
</dbReference>
<dbReference type="PRINTS" id="PR00086">
    <property type="entry name" value="LLDHDRGNASE"/>
</dbReference>
<dbReference type="SUPFAM" id="SSF56327">
    <property type="entry name" value="LDH C-terminal domain-like"/>
    <property type="match status" value="1"/>
</dbReference>
<dbReference type="SUPFAM" id="SSF51735">
    <property type="entry name" value="NAD(P)-binding Rossmann-fold domains"/>
    <property type="match status" value="1"/>
</dbReference>
<sequence length="322" mass="34091">MARDKIALIGSGQIGGTLAHLVGLKELGDVVMFDIAEGVPQGKALDIAQSSPVDGFDAHYTGANSYEALDNAKVCIVTAGVPRKPGMSRDDLLSINLKVMEQVGAGIKKYAPDAFVICITNPLDAMVWALQKASGLPAKKVVGMAGVLDSARFRYFLADEFNVSVEDVTAFVLGGHGDTMVPLTKYSTVAGIPLPDLVKMGWTSQARIDEIVDRTRNGGAEIVNLLKTGSAYYAPAASAIAMAESYLRDKKRVLPCAAYLNGEFGVKDMYVGVPVVIGSKGVERIVEIELAGKDREAFDKSVAAVQGLVDACKKIAPDLLGR</sequence>
<feature type="chain" id="PRO_1000026467" description="Malate dehydrogenase">
    <location>
        <begin position="1"/>
        <end position="322"/>
    </location>
</feature>
<feature type="active site" description="Proton acceptor" evidence="1">
    <location>
        <position position="176"/>
    </location>
</feature>
<feature type="binding site" evidence="1">
    <location>
        <begin position="10"/>
        <end position="15"/>
    </location>
    <ligand>
        <name>NAD(+)</name>
        <dbReference type="ChEBI" id="CHEBI:57540"/>
    </ligand>
</feature>
<feature type="binding site" evidence="1">
    <location>
        <position position="34"/>
    </location>
    <ligand>
        <name>NAD(+)</name>
        <dbReference type="ChEBI" id="CHEBI:57540"/>
    </ligand>
</feature>
<feature type="binding site" evidence="1">
    <location>
        <position position="83"/>
    </location>
    <ligand>
        <name>substrate</name>
    </ligand>
</feature>
<feature type="binding site" evidence="1">
    <location>
        <position position="89"/>
    </location>
    <ligand>
        <name>substrate</name>
    </ligand>
</feature>
<feature type="binding site" evidence="1">
    <location>
        <position position="96"/>
    </location>
    <ligand>
        <name>NAD(+)</name>
        <dbReference type="ChEBI" id="CHEBI:57540"/>
    </ligand>
</feature>
<feature type="binding site" evidence="1">
    <location>
        <begin position="119"/>
        <end position="121"/>
    </location>
    <ligand>
        <name>NAD(+)</name>
        <dbReference type="ChEBI" id="CHEBI:57540"/>
    </ligand>
</feature>
<feature type="binding site" evidence="1">
    <location>
        <position position="121"/>
    </location>
    <ligand>
        <name>substrate</name>
    </ligand>
</feature>
<feature type="binding site" evidence="1">
    <location>
        <position position="152"/>
    </location>
    <ligand>
        <name>substrate</name>
    </ligand>
</feature>
<protein>
    <recommendedName>
        <fullName evidence="1">Malate dehydrogenase</fullName>
        <ecNumber evidence="1">1.1.1.37</ecNumber>
    </recommendedName>
</protein>
<organism>
    <name type="scientific">Bradyrhizobium sp. (strain ORS 278)</name>
    <dbReference type="NCBI Taxonomy" id="114615"/>
    <lineage>
        <taxon>Bacteria</taxon>
        <taxon>Pseudomonadati</taxon>
        <taxon>Pseudomonadota</taxon>
        <taxon>Alphaproteobacteria</taxon>
        <taxon>Hyphomicrobiales</taxon>
        <taxon>Nitrobacteraceae</taxon>
        <taxon>Bradyrhizobium</taxon>
    </lineage>
</organism>
<keyword id="KW-0520">NAD</keyword>
<keyword id="KW-0560">Oxidoreductase</keyword>
<keyword id="KW-1185">Reference proteome</keyword>
<keyword id="KW-0816">Tricarboxylic acid cycle</keyword>
<gene>
    <name evidence="1" type="primary">mdh</name>
    <name type="ordered locus">BRADO0403</name>
</gene>
<accession>A4YKC5</accession>
<proteinExistence type="inferred from homology"/>
<reference key="1">
    <citation type="journal article" date="2007" name="Science">
        <title>Legumes symbioses: absence of nod genes in photosynthetic bradyrhizobia.</title>
        <authorList>
            <person name="Giraud E."/>
            <person name="Moulin L."/>
            <person name="Vallenet D."/>
            <person name="Barbe V."/>
            <person name="Cytryn E."/>
            <person name="Avarre J.-C."/>
            <person name="Jaubert M."/>
            <person name="Simon D."/>
            <person name="Cartieaux F."/>
            <person name="Prin Y."/>
            <person name="Bena G."/>
            <person name="Hannibal L."/>
            <person name="Fardoux J."/>
            <person name="Kojadinovic M."/>
            <person name="Vuillet L."/>
            <person name="Lajus A."/>
            <person name="Cruveiller S."/>
            <person name="Rouy Z."/>
            <person name="Mangenot S."/>
            <person name="Segurens B."/>
            <person name="Dossat C."/>
            <person name="Franck W.L."/>
            <person name="Chang W.-S."/>
            <person name="Saunders E."/>
            <person name="Bruce D."/>
            <person name="Richardson P."/>
            <person name="Normand P."/>
            <person name="Dreyfus B."/>
            <person name="Pignol D."/>
            <person name="Stacey G."/>
            <person name="Emerich D."/>
            <person name="Vermeglio A."/>
            <person name="Medigue C."/>
            <person name="Sadowsky M."/>
        </authorList>
    </citation>
    <scope>NUCLEOTIDE SEQUENCE [LARGE SCALE GENOMIC DNA]</scope>
    <source>
        <strain>ORS 278</strain>
    </source>
</reference>
<name>MDH_BRASO</name>
<comment type="function">
    <text evidence="1">Catalyzes the reversible oxidation of malate to oxaloacetate.</text>
</comment>
<comment type="catalytic activity">
    <reaction evidence="1">
        <text>(S)-malate + NAD(+) = oxaloacetate + NADH + H(+)</text>
        <dbReference type="Rhea" id="RHEA:21432"/>
        <dbReference type="ChEBI" id="CHEBI:15378"/>
        <dbReference type="ChEBI" id="CHEBI:15589"/>
        <dbReference type="ChEBI" id="CHEBI:16452"/>
        <dbReference type="ChEBI" id="CHEBI:57540"/>
        <dbReference type="ChEBI" id="CHEBI:57945"/>
        <dbReference type="EC" id="1.1.1.37"/>
    </reaction>
</comment>
<comment type="similarity">
    <text evidence="1">Belongs to the LDH/MDH superfamily. MDH type 3 family.</text>
</comment>
<evidence type="ECO:0000255" key="1">
    <source>
        <dbReference type="HAMAP-Rule" id="MF_00487"/>
    </source>
</evidence>